<organism>
    <name type="scientific">Geobacillus sp. (strain WCH70)</name>
    <dbReference type="NCBI Taxonomy" id="471223"/>
    <lineage>
        <taxon>Bacteria</taxon>
        <taxon>Bacillati</taxon>
        <taxon>Bacillota</taxon>
        <taxon>Bacilli</taxon>
        <taxon>Bacillales</taxon>
        <taxon>Anoxybacillaceae</taxon>
        <taxon>Geobacillus</taxon>
    </lineage>
</organism>
<evidence type="ECO:0000255" key="1">
    <source>
        <dbReference type="HAMAP-Rule" id="MF_01863"/>
    </source>
</evidence>
<comment type="similarity">
    <text evidence="1">Belongs to the UPF0741 family.</text>
</comment>
<protein>
    <recommendedName>
        <fullName evidence="1">UPF0741 protein GWCH70_3359</fullName>
    </recommendedName>
</protein>
<accession>C5D9S1</accession>
<name>Y3359_GEOSW</name>
<gene>
    <name type="ordered locus">GWCH70_3359</name>
</gene>
<feature type="chain" id="PRO_1000216159" description="UPF0741 protein GWCH70_3359">
    <location>
        <begin position="1"/>
        <end position="75"/>
    </location>
</feature>
<sequence>MANEFRVCDDCKAPNLKTLIPRLKKLDPNATIKIGCQSYCGPGRKKTFAFVNNRPVSALTEDELIEKIAERLKKS</sequence>
<reference key="1">
    <citation type="submission" date="2009-06" db="EMBL/GenBank/DDBJ databases">
        <title>Complete sequence of chromosome of Geopacillus sp. WCH70.</title>
        <authorList>
            <consortium name="US DOE Joint Genome Institute"/>
            <person name="Lucas S."/>
            <person name="Copeland A."/>
            <person name="Lapidus A."/>
            <person name="Glavina del Rio T."/>
            <person name="Dalin E."/>
            <person name="Tice H."/>
            <person name="Bruce D."/>
            <person name="Goodwin L."/>
            <person name="Pitluck S."/>
            <person name="Chertkov O."/>
            <person name="Brettin T."/>
            <person name="Detter J.C."/>
            <person name="Han C."/>
            <person name="Larimer F."/>
            <person name="Land M."/>
            <person name="Hauser L."/>
            <person name="Kyrpides N."/>
            <person name="Mikhailova N."/>
            <person name="Brumm P."/>
            <person name="Mead D.A."/>
            <person name="Richardson P."/>
        </authorList>
    </citation>
    <scope>NUCLEOTIDE SEQUENCE [LARGE SCALE GENOMIC DNA]</scope>
    <source>
        <strain>WCH70</strain>
    </source>
</reference>
<dbReference type="EMBL" id="CP001638">
    <property type="protein sequence ID" value="ACS25999.1"/>
    <property type="molecule type" value="Genomic_DNA"/>
</dbReference>
<dbReference type="SMR" id="C5D9S1"/>
<dbReference type="STRING" id="471223.GWCH70_3359"/>
<dbReference type="KEGG" id="gwc:GWCH70_3359"/>
<dbReference type="eggNOG" id="COG4844">
    <property type="taxonomic scope" value="Bacteria"/>
</dbReference>
<dbReference type="HOGENOM" id="CLU_163820_1_0_9"/>
<dbReference type="OrthoDB" id="1645211at2"/>
<dbReference type="HAMAP" id="MF_01863">
    <property type="entry name" value="UPF0741"/>
    <property type="match status" value="1"/>
</dbReference>
<dbReference type="InterPro" id="IPR009910">
    <property type="entry name" value="DUF1450"/>
</dbReference>
<dbReference type="InterPro" id="IPR020880">
    <property type="entry name" value="UPF0741"/>
</dbReference>
<dbReference type="Pfam" id="PF07293">
    <property type="entry name" value="DUF1450"/>
    <property type="match status" value="1"/>
</dbReference>
<proteinExistence type="inferred from homology"/>